<comment type="function">
    <text evidence="1">Required for the insertion and/or proper folding and/or complex formation of integral membrane proteins into the membrane. Involved in integration of membrane proteins that insert both dependently and independently of the Sec translocase complex, as well as at least some lipoproteins.</text>
</comment>
<comment type="subcellular location">
    <subcellularLocation>
        <location evidence="1">Cell membrane</location>
        <topology evidence="1">Multi-pass membrane protein</topology>
    </subcellularLocation>
</comment>
<comment type="similarity">
    <text evidence="1">Belongs to the OXA1/ALB3/YidC family. Type 2 subfamily.</text>
</comment>
<reference key="1">
    <citation type="journal article" date="2006" name="Lancet">
        <title>Complete genome sequence of USA300, an epidemic clone of community-acquired meticillin-resistant Staphylococcus aureus.</title>
        <authorList>
            <person name="Diep B.A."/>
            <person name="Gill S.R."/>
            <person name="Chang R.F."/>
            <person name="Phan T.H."/>
            <person name="Chen J.H."/>
            <person name="Davidson M.G."/>
            <person name="Lin F."/>
            <person name="Lin J."/>
            <person name="Carleton H.A."/>
            <person name="Mongodin E.F."/>
            <person name="Sensabaugh G.F."/>
            <person name="Perdreau-Remington F."/>
        </authorList>
    </citation>
    <scope>NUCLEOTIDE SEQUENCE [LARGE SCALE GENOMIC DNA]</scope>
    <source>
        <strain>USA300</strain>
    </source>
</reference>
<feature type="signal peptide" evidence="1">
    <location>
        <begin position="1"/>
        <end position="19"/>
    </location>
</feature>
<feature type="chain" id="PRO_1000088268" description="Membrane protein insertase YidC">
    <location>
        <begin position="20"/>
        <end position="290"/>
    </location>
</feature>
<feature type="transmembrane region" description="Helical" evidence="1">
    <location>
        <begin position="56"/>
        <end position="76"/>
    </location>
</feature>
<feature type="transmembrane region" description="Helical" evidence="1">
    <location>
        <begin position="134"/>
        <end position="154"/>
    </location>
</feature>
<feature type="transmembrane region" description="Helical" evidence="1">
    <location>
        <begin position="176"/>
        <end position="196"/>
    </location>
</feature>
<feature type="transmembrane region" description="Helical" evidence="1">
    <location>
        <begin position="207"/>
        <end position="224"/>
    </location>
</feature>
<feature type="transmembrane region" description="Helical" evidence="1">
    <location>
        <begin position="229"/>
        <end position="251"/>
    </location>
</feature>
<feature type="region of interest" description="Disordered" evidence="2">
    <location>
        <begin position="270"/>
        <end position="290"/>
    </location>
</feature>
<feature type="lipid moiety-binding region" description="N-palmitoyl cysteine" evidence="1">
    <location>
        <position position="20"/>
    </location>
</feature>
<feature type="lipid moiety-binding region" description="S-diacylglycerol cysteine" evidence="1">
    <location>
        <position position="20"/>
    </location>
</feature>
<keyword id="KW-1003">Cell membrane</keyword>
<keyword id="KW-0143">Chaperone</keyword>
<keyword id="KW-0449">Lipoprotein</keyword>
<keyword id="KW-0472">Membrane</keyword>
<keyword id="KW-0564">Palmitate</keyword>
<keyword id="KW-0653">Protein transport</keyword>
<keyword id="KW-0732">Signal</keyword>
<keyword id="KW-0812">Transmembrane</keyword>
<keyword id="KW-1133">Transmembrane helix</keyword>
<keyword id="KW-0813">Transport</keyword>
<proteinExistence type="inferred from homology"/>
<sequence>MKKKALLPLFLGIMVFLAGCDYSKPEKRSGFFYNTFVDPMKNVLDWLGNNLLNDNYGLAIIILVLVIRIILLPFMLSNYKNSHMMRQKMKVAKPEVEKIQEKVKRARTQEEKMAANQELMQVYKKYDMNPIKSMLGCLPMLIQLPIIMGLYFVLKDQLVDGLFKYPHFLWFDLGRPDIWITIIAGVLYFIQAYVSSKTMPDEQRQMGYMMMVISPIMIIWISLSSASALGLYWSVSAAFLVVQTHFANIYYEKVAKKEVQPFIEAYEREHNGGSNKKGKNTQVVSKKKKK</sequence>
<name>YIDC_STAA3</name>
<protein>
    <recommendedName>
        <fullName evidence="1">Membrane protein insertase YidC</fullName>
    </recommendedName>
    <alternativeName>
        <fullName evidence="1">Foldase YidC</fullName>
    </alternativeName>
    <alternativeName>
        <fullName evidence="1">Membrane integrase YidC</fullName>
    </alternativeName>
    <alternativeName>
        <fullName evidence="1">Membrane protein YidC</fullName>
    </alternativeName>
</protein>
<evidence type="ECO:0000255" key="1">
    <source>
        <dbReference type="HAMAP-Rule" id="MF_01811"/>
    </source>
</evidence>
<evidence type="ECO:0000256" key="2">
    <source>
        <dbReference type="SAM" id="MobiDB-lite"/>
    </source>
</evidence>
<accession>Q2FF36</accession>
<gene>
    <name evidence="1" type="primary">yidC</name>
    <name type="ordered locus">SAUSA300_2046</name>
</gene>
<organism>
    <name type="scientific">Staphylococcus aureus (strain USA300)</name>
    <dbReference type="NCBI Taxonomy" id="367830"/>
    <lineage>
        <taxon>Bacteria</taxon>
        <taxon>Bacillati</taxon>
        <taxon>Bacillota</taxon>
        <taxon>Bacilli</taxon>
        <taxon>Bacillales</taxon>
        <taxon>Staphylococcaceae</taxon>
        <taxon>Staphylococcus</taxon>
    </lineage>
</organism>
<dbReference type="EMBL" id="CP000255">
    <property type="protein sequence ID" value="ABD21780.1"/>
    <property type="molecule type" value="Genomic_DNA"/>
</dbReference>
<dbReference type="RefSeq" id="WP_000725802.1">
    <property type="nucleotide sequence ID" value="NZ_CP027476.1"/>
</dbReference>
<dbReference type="SMR" id="Q2FF36"/>
<dbReference type="KEGG" id="saa:SAUSA300_2046"/>
<dbReference type="HOGENOM" id="CLU_036138_5_2_9"/>
<dbReference type="Proteomes" id="UP000001939">
    <property type="component" value="Chromosome"/>
</dbReference>
<dbReference type="GO" id="GO:0005886">
    <property type="term" value="C:plasma membrane"/>
    <property type="evidence" value="ECO:0007669"/>
    <property type="project" value="UniProtKB-SubCell"/>
</dbReference>
<dbReference type="GO" id="GO:0032977">
    <property type="term" value="F:membrane insertase activity"/>
    <property type="evidence" value="ECO:0007669"/>
    <property type="project" value="InterPro"/>
</dbReference>
<dbReference type="GO" id="GO:0051205">
    <property type="term" value="P:protein insertion into membrane"/>
    <property type="evidence" value="ECO:0007669"/>
    <property type="project" value="TreeGrafter"/>
</dbReference>
<dbReference type="GO" id="GO:0015031">
    <property type="term" value="P:protein transport"/>
    <property type="evidence" value="ECO:0007669"/>
    <property type="project" value="UniProtKB-KW"/>
</dbReference>
<dbReference type="CDD" id="cd20070">
    <property type="entry name" value="5TM_YidC_Alb3"/>
    <property type="match status" value="1"/>
</dbReference>
<dbReference type="HAMAP" id="MF_01811">
    <property type="entry name" value="YidC_type2"/>
    <property type="match status" value="1"/>
</dbReference>
<dbReference type="InterPro" id="IPR001708">
    <property type="entry name" value="YidC/ALB3/OXA1/COX18"/>
</dbReference>
<dbReference type="InterPro" id="IPR028055">
    <property type="entry name" value="YidC/Oxa/ALB_C"/>
</dbReference>
<dbReference type="InterPro" id="IPR023060">
    <property type="entry name" value="YidC/YidC1/YidC2_Firmicutes"/>
</dbReference>
<dbReference type="InterPro" id="IPR047196">
    <property type="entry name" value="YidC_ALB_C"/>
</dbReference>
<dbReference type="NCBIfam" id="TIGR03592">
    <property type="entry name" value="yidC_oxa1_cterm"/>
    <property type="match status" value="1"/>
</dbReference>
<dbReference type="PANTHER" id="PTHR12428:SF65">
    <property type="entry name" value="CYTOCHROME C OXIDASE ASSEMBLY PROTEIN COX18, MITOCHONDRIAL"/>
    <property type="match status" value="1"/>
</dbReference>
<dbReference type="PANTHER" id="PTHR12428">
    <property type="entry name" value="OXA1"/>
    <property type="match status" value="1"/>
</dbReference>
<dbReference type="Pfam" id="PF02096">
    <property type="entry name" value="60KD_IMP"/>
    <property type="match status" value="1"/>
</dbReference>
<dbReference type="PRINTS" id="PR00701">
    <property type="entry name" value="60KDINNERMP"/>
</dbReference>
<dbReference type="PROSITE" id="PS51257">
    <property type="entry name" value="PROKAR_LIPOPROTEIN"/>
    <property type="match status" value="1"/>
</dbReference>